<proteinExistence type="evidence at transcript level"/>
<organism>
    <name type="scientific">Mesocricetus auratus</name>
    <name type="common">Golden hamster</name>
    <dbReference type="NCBI Taxonomy" id="10036"/>
    <lineage>
        <taxon>Eukaryota</taxon>
        <taxon>Metazoa</taxon>
        <taxon>Chordata</taxon>
        <taxon>Craniata</taxon>
        <taxon>Vertebrata</taxon>
        <taxon>Euteleostomi</taxon>
        <taxon>Mammalia</taxon>
        <taxon>Eutheria</taxon>
        <taxon>Euarchontoglires</taxon>
        <taxon>Glires</taxon>
        <taxon>Rodentia</taxon>
        <taxon>Myomorpha</taxon>
        <taxon>Muroidea</taxon>
        <taxon>Cricetidae</taxon>
        <taxon>Cricetinae</taxon>
        <taxon>Mesocricetus</taxon>
    </lineage>
</organism>
<feature type="chain" id="PRO_0000127143" description="Class E basic helix-loop-helix protein 22">
    <location>
        <begin position="1"/>
        <end position="365"/>
    </location>
</feature>
<feature type="domain" description="bHLH" evidence="1">
    <location>
        <begin position="226"/>
        <end position="280"/>
    </location>
</feature>
<feature type="region of interest" description="Disordered" evidence="2">
    <location>
        <begin position="34"/>
        <end position="93"/>
    </location>
</feature>
<feature type="region of interest" description="Disordered" evidence="2">
    <location>
        <begin position="134"/>
        <end position="156"/>
    </location>
</feature>
<feature type="region of interest" description="Disordered" evidence="2">
    <location>
        <begin position="188"/>
        <end position="225"/>
    </location>
</feature>
<feature type="compositionally biased region" description="Gly residues" evidence="2">
    <location>
        <begin position="82"/>
        <end position="93"/>
    </location>
</feature>
<feature type="compositionally biased region" description="Gly residues" evidence="2">
    <location>
        <begin position="191"/>
        <end position="216"/>
    </location>
</feature>
<comment type="function">
    <text>Inhibits DNA binding of TCF3/E47 homodimers and TCF3 (E47)/NEUROD1 heterodimers and acts as a strong repressor of Neurod1 and Myod-responsive genes, probably by heterodimerization with class a basic helix-loop-helix factors. Despite the presence of an intact basic domain, does not bind to DNA.</text>
</comment>
<comment type="subunit">
    <text>Heterodimer with other bHLH proteins, like TCF3/E47.</text>
</comment>
<comment type="subcellular location">
    <subcellularLocation>
        <location evidence="1">Nucleus</location>
    </subcellularLocation>
</comment>
<comment type="tissue specificity">
    <text>Kidney, lung, brain and pancreas (insulinoma).</text>
</comment>
<comment type="sequence caution" evidence="3">
    <conflict type="erroneous initiation">
        <sequence resource="EMBL-CDS" id="AAB50691"/>
    </conflict>
</comment>
<keyword id="KW-0539">Nucleus</keyword>
<keyword id="KW-1185">Reference proteome</keyword>
<keyword id="KW-0678">Repressor</keyword>
<keyword id="KW-0804">Transcription</keyword>
<keyword id="KW-0805">Transcription regulation</keyword>
<protein>
    <recommendedName>
        <fullName>Class E basic helix-loop-helix protein 22</fullName>
        <shortName>bHLHe22</shortName>
    </recommendedName>
    <alternativeName>
        <fullName>Beta-cell E-box transcriptional activator 3</fullName>
        <shortName>BETA3</shortName>
    </alternativeName>
    <alternativeName>
        <fullName>Class B basic helix-loop-helix protein 5</fullName>
        <shortName>bHLHb5</shortName>
    </alternativeName>
</protein>
<accession>O09029</accession>
<name>BHE22_MESAU</name>
<dbReference type="EMBL" id="S80870">
    <property type="protein sequence ID" value="AAB50691.1"/>
    <property type="status" value="ALT_INIT"/>
    <property type="molecule type" value="mRNA"/>
</dbReference>
<dbReference type="SMR" id="O09029"/>
<dbReference type="STRING" id="10036.ENSMAUP00000009525"/>
<dbReference type="eggNOG" id="KOG3898">
    <property type="taxonomic scope" value="Eukaryota"/>
</dbReference>
<dbReference type="OrthoDB" id="10011855at2759"/>
<dbReference type="Proteomes" id="UP000189706">
    <property type="component" value="Unplaced"/>
</dbReference>
<dbReference type="GO" id="GO:0005634">
    <property type="term" value="C:nucleus"/>
    <property type="evidence" value="ECO:0007669"/>
    <property type="project" value="UniProtKB-SubCell"/>
</dbReference>
<dbReference type="GO" id="GO:0000981">
    <property type="term" value="F:DNA-binding transcription factor activity, RNA polymerase II-specific"/>
    <property type="evidence" value="ECO:0007669"/>
    <property type="project" value="TreeGrafter"/>
</dbReference>
<dbReference type="GO" id="GO:0070888">
    <property type="term" value="F:E-box binding"/>
    <property type="evidence" value="ECO:0007669"/>
    <property type="project" value="TreeGrafter"/>
</dbReference>
<dbReference type="GO" id="GO:0046983">
    <property type="term" value="F:protein dimerization activity"/>
    <property type="evidence" value="ECO:0007669"/>
    <property type="project" value="InterPro"/>
</dbReference>
<dbReference type="GO" id="GO:0061564">
    <property type="term" value="P:axon development"/>
    <property type="evidence" value="ECO:0007669"/>
    <property type="project" value="TreeGrafter"/>
</dbReference>
<dbReference type="GO" id="GO:0045944">
    <property type="term" value="P:positive regulation of transcription by RNA polymerase II"/>
    <property type="evidence" value="ECO:0007669"/>
    <property type="project" value="TreeGrafter"/>
</dbReference>
<dbReference type="GO" id="GO:0007423">
    <property type="term" value="P:sensory organ development"/>
    <property type="evidence" value="ECO:0007669"/>
    <property type="project" value="TreeGrafter"/>
</dbReference>
<dbReference type="CDD" id="cd18954">
    <property type="entry name" value="bHLH_TS_bHLHe22_bHLHb5"/>
    <property type="match status" value="1"/>
</dbReference>
<dbReference type="FunFam" id="4.10.280.10:FF:000026">
    <property type="entry name" value="Basic helix-loop-helix family, member e23"/>
    <property type="match status" value="1"/>
</dbReference>
<dbReference type="Gene3D" id="4.10.280.10">
    <property type="entry name" value="Helix-loop-helix DNA-binding domain"/>
    <property type="match status" value="1"/>
</dbReference>
<dbReference type="InterPro" id="IPR011598">
    <property type="entry name" value="bHLH_dom"/>
</dbReference>
<dbReference type="InterPro" id="IPR050359">
    <property type="entry name" value="bHLH_transcription_factors"/>
</dbReference>
<dbReference type="InterPro" id="IPR036638">
    <property type="entry name" value="HLH_DNA-bd_sf"/>
</dbReference>
<dbReference type="PANTHER" id="PTHR19290">
    <property type="entry name" value="BASIC HELIX-LOOP-HELIX PROTEIN NEUROGENIN-RELATED"/>
    <property type="match status" value="1"/>
</dbReference>
<dbReference type="PANTHER" id="PTHR19290:SF52">
    <property type="entry name" value="CLASS E BASIC HELIX-LOOP-HELIX PROTEIN 22"/>
    <property type="match status" value="1"/>
</dbReference>
<dbReference type="Pfam" id="PF00010">
    <property type="entry name" value="HLH"/>
    <property type="match status" value="1"/>
</dbReference>
<dbReference type="SMART" id="SM00353">
    <property type="entry name" value="HLH"/>
    <property type="match status" value="1"/>
</dbReference>
<dbReference type="SUPFAM" id="SSF47459">
    <property type="entry name" value="HLH, helix-loop-helix DNA-binding domain"/>
    <property type="match status" value="1"/>
</dbReference>
<dbReference type="PROSITE" id="PS50888">
    <property type="entry name" value="BHLH"/>
    <property type="match status" value="1"/>
</dbReference>
<reference key="1">
    <citation type="journal article" date="1996" name="Mol. Cell. Biol.">
        <title>BETA3, a novel helix-loop-helix protein, can act as a negative regulator of BETA2 and MyoD-responsive genes.</title>
        <authorList>
            <person name="Peyton M."/>
            <person name="Stellrecht C.M.M."/>
            <person name="Naya F.J."/>
            <person name="Huang H.-P."/>
            <person name="Samora P.J."/>
            <person name="Tsai M.-J."/>
        </authorList>
    </citation>
    <scope>NUCLEOTIDE SEQUENCE [MRNA]</scope>
</reference>
<evidence type="ECO:0000255" key="1">
    <source>
        <dbReference type="PROSITE-ProRule" id="PRU00981"/>
    </source>
</evidence>
<evidence type="ECO:0000256" key="2">
    <source>
        <dbReference type="SAM" id="MobiDB-lite"/>
    </source>
</evidence>
<evidence type="ECO:0000305" key="3"/>
<sequence>MERGLHLGAAAASEDDLFLHKSLGASTAKRLEAAFRSTPPGMDLSLAPPPRERPASSSSSPLGCFEPADPEGAGLLLPPPGGGGGAGGGGGGGGGGGVSVPGLLVGSAGVGGDPNLSSLPAGAALCLKYGESAGRGSVAESSGGEQSPDDDSDGRCELVLRAGGADPRASPGAGGGGTKVVEGCSNAHLHGGAGLPPGGSTGSGGGGSGGGGGGGSSSKKSKEQKALRLNINARERRRMHDLNDALDELRAVIPYAHSPSVRKLSKIATLLLAKNYILMQAQALEEMRRLVAYLNQGQAISAASLPSSAAAAAAAAALHPALGAYEQAAGYPFSAGLPPAASCPEKCALFNSVSSSLCKQCTEKP</sequence>
<gene>
    <name type="primary">BHLHE22</name>
    <name type="synonym">BHLHB5</name>
</gene>